<proteinExistence type="inferred from homology"/>
<organism>
    <name type="scientific">Oceanobacillus iheyensis (strain DSM 14371 / CIP 107618 / JCM 11309 / KCTC 3954 / HTE831)</name>
    <dbReference type="NCBI Taxonomy" id="221109"/>
    <lineage>
        <taxon>Bacteria</taxon>
        <taxon>Bacillati</taxon>
        <taxon>Bacillota</taxon>
        <taxon>Bacilli</taxon>
        <taxon>Bacillales</taxon>
        <taxon>Bacillaceae</taxon>
        <taxon>Oceanobacillus</taxon>
    </lineage>
</organism>
<keyword id="KW-0119">Carbohydrate metabolism</keyword>
<keyword id="KW-0963">Cytoplasm</keyword>
<keyword id="KW-0413">Isomerase</keyword>
<keyword id="KW-0460">Magnesium</keyword>
<keyword id="KW-0479">Metal-binding</keyword>
<keyword id="KW-1185">Reference proteome</keyword>
<keyword id="KW-0859">Xylose metabolism</keyword>
<protein>
    <recommendedName>
        <fullName evidence="1">Xylose isomerase</fullName>
        <ecNumber evidence="1">5.3.1.5</ecNumber>
    </recommendedName>
</protein>
<sequence length="439" mass="49881">MSYFNEIGTIQYEGAKSDNPFAFKFYNPTESINGQTMEEHLRFGVAYWHTFTEDLSDPFGNGTAIRPWDKFNGMDLAKARVEAAFEFFEKLQIPYFCFHDVDIAPEGSSLKESNENLDTVVAMIKEYMKDSKTKLLWNTVNNFTHPRFVHGAASSNNADVFAYAAAKVKKGLEVGKELGAENYVFWGGREGYETLLNTNMKLELDNLARFFHMAKDYANEIDFNAQFLIEPKPKEPTSHQYDFDVASGYAFLQNYDLQDTFKFNIEANHATLAGHTFEHELHYARIHNMLGSVDANQGHPLLGWDTDEFPSDIYTTTLAMYEILKNDGLGKGGLNFDAKVRRGSFTAEDLFHAHIAGMDSFAIGLKVAQRLMDDRVLENVVEDRYRSFNQGIGRDIVSGKTDFHQLEKHALTLSEITQPSGQLEVIKNKINQYLLTTFA</sequence>
<feature type="chain" id="PRO_0000195784" description="Xylose isomerase">
    <location>
        <begin position="1"/>
        <end position="439"/>
    </location>
</feature>
<feature type="active site" evidence="1">
    <location>
        <position position="99"/>
    </location>
</feature>
<feature type="active site" evidence="1">
    <location>
        <position position="102"/>
    </location>
</feature>
<feature type="binding site" evidence="1">
    <location>
        <position position="230"/>
    </location>
    <ligand>
        <name>Mg(2+)</name>
        <dbReference type="ChEBI" id="CHEBI:18420"/>
        <label>1</label>
    </ligand>
</feature>
<feature type="binding site" evidence="1">
    <location>
        <position position="266"/>
    </location>
    <ligand>
        <name>Mg(2+)</name>
        <dbReference type="ChEBI" id="CHEBI:18420"/>
        <label>1</label>
    </ligand>
</feature>
<feature type="binding site" evidence="1">
    <location>
        <position position="266"/>
    </location>
    <ligand>
        <name>Mg(2+)</name>
        <dbReference type="ChEBI" id="CHEBI:18420"/>
        <label>2</label>
    </ligand>
</feature>
<feature type="binding site" evidence="1">
    <location>
        <position position="269"/>
    </location>
    <ligand>
        <name>Mg(2+)</name>
        <dbReference type="ChEBI" id="CHEBI:18420"/>
        <label>2</label>
    </ligand>
</feature>
<feature type="binding site" evidence="1">
    <location>
        <position position="294"/>
    </location>
    <ligand>
        <name>Mg(2+)</name>
        <dbReference type="ChEBI" id="CHEBI:18420"/>
        <label>1</label>
    </ligand>
</feature>
<feature type="binding site" evidence="1">
    <location>
        <position position="305"/>
    </location>
    <ligand>
        <name>Mg(2+)</name>
        <dbReference type="ChEBI" id="CHEBI:18420"/>
        <label>2</label>
    </ligand>
</feature>
<feature type="binding site" evidence="1">
    <location>
        <position position="307"/>
    </location>
    <ligand>
        <name>Mg(2+)</name>
        <dbReference type="ChEBI" id="CHEBI:18420"/>
        <label>2</label>
    </ligand>
</feature>
<feature type="binding site" evidence="1">
    <location>
        <position position="337"/>
    </location>
    <ligand>
        <name>Mg(2+)</name>
        <dbReference type="ChEBI" id="CHEBI:18420"/>
        <label>1</label>
    </ligand>
</feature>
<reference key="1">
    <citation type="journal article" date="2002" name="Nucleic Acids Res.">
        <title>Genome sequence of Oceanobacillus iheyensis isolated from the Iheya Ridge and its unexpected adaptive capabilities to extreme environments.</title>
        <authorList>
            <person name="Takami H."/>
            <person name="Takaki Y."/>
            <person name="Uchiyama I."/>
        </authorList>
    </citation>
    <scope>NUCLEOTIDE SEQUENCE [LARGE SCALE GENOMIC DNA]</scope>
    <source>
        <strain>DSM 14371 / CIP 107618 / JCM 11309 / KCTC 3954 / HTE831</strain>
    </source>
</reference>
<comment type="catalytic activity">
    <reaction evidence="1">
        <text>alpha-D-xylose = alpha-D-xylulofuranose</text>
        <dbReference type="Rhea" id="RHEA:22816"/>
        <dbReference type="ChEBI" id="CHEBI:28518"/>
        <dbReference type="ChEBI" id="CHEBI:188998"/>
        <dbReference type="EC" id="5.3.1.5"/>
    </reaction>
</comment>
<comment type="cofactor">
    <cofactor evidence="1">
        <name>Mg(2+)</name>
        <dbReference type="ChEBI" id="CHEBI:18420"/>
    </cofactor>
    <text evidence="1">Binds 2 magnesium ions per subunit.</text>
</comment>
<comment type="subunit">
    <text evidence="1">Homotetramer.</text>
</comment>
<comment type="subcellular location">
    <subcellularLocation>
        <location evidence="1">Cytoplasm</location>
    </subcellularLocation>
</comment>
<comment type="similarity">
    <text evidence="1">Belongs to the xylose isomerase family.</text>
</comment>
<accession>Q8ELU7</accession>
<gene>
    <name evidence="1" type="primary">xylA</name>
    <name type="ordered locus">OB3119</name>
</gene>
<dbReference type="EC" id="5.3.1.5" evidence="1"/>
<dbReference type="EMBL" id="BA000028">
    <property type="protein sequence ID" value="BAC15075.1"/>
    <property type="molecule type" value="Genomic_DNA"/>
</dbReference>
<dbReference type="RefSeq" id="WP_011067516.1">
    <property type="nucleotide sequence ID" value="NC_004193.1"/>
</dbReference>
<dbReference type="SMR" id="Q8ELU7"/>
<dbReference type="STRING" id="221109.gene:10735371"/>
<dbReference type="KEGG" id="oih:OB3119"/>
<dbReference type="eggNOG" id="COG2115">
    <property type="taxonomic scope" value="Bacteria"/>
</dbReference>
<dbReference type="HOGENOM" id="CLU_037261_1_0_9"/>
<dbReference type="OrthoDB" id="9763981at2"/>
<dbReference type="PhylomeDB" id="Q8ELU7"/>
<dbReference type="Proteomes" id="UP000000822">
    <property type="component" value="Chromosome"/>
</dbReference>
<dbReference type="GO" id="GO:0005737">
    <property type="term" value="C:cytoplasm"/>
    <property type="evidence" value="ECO:0007669"/>
    <property type="project" value="UniProtKB-SubCell"/>
</dbReference>
<dbReference type="GO" id="GO:0000287">
    <property type="term" value="F:magnesium ion binding"/>
    <property type="evidence" value="ECO:0007669"/>
    <property type="project" value="UniProtKB-UniRule"/>
</dbReference>
<dbReference type="GO" id="GO:0009045">
    <property type="term" value="F:xylose isomerase activity"/>
    <property type="evidence" value="ECO:0007669"/>
    <property type="project" value="UniProtKB-UniRule"/>
</dbReference>
<dbReference type="GO" id="GO:0042732">
    <property type="term" value="P:D-xylose metabolic process"/>
    <property type="evidence" value="ECO:0007669"/>
    <property type="project" value="UniProtKB-UniRule"/>
</dbReference>
<dbReference type="Gene3D" id="3.20.20.150">
    <property type="entry name" value="Divalent-metal-dependent TIM barrel enzymes"/>
    <property type="match status" value="1"/>
</dbReference>
<dbReference type="HAMAP" id="MF_00455">
    <property type="entry name" value="Xylose_isom_A"/>
    <property type="match status" value="1"/>
</dbReference>
<dbReference type="InterPro" id="IPR036237">
    <property type="entry name" value="Xyl_isomerase-like_sf"/>
</dbReference>
<dbReference type="InterPro" id="IPR013452">
    <property type="entry name" value="Xylose_isom_bac"/>
</dbReference>
<dbReference type="InterPro" id="IPR001998">
    <property type="entry name" value="Xylose_isomerase"/>
</dbReference>
<dbReference type="NCBIfam" id="NF003998">
    <property type="entry name" value="PRK05474.1"/>
    <property type="match status" value="1"/>
</dbReference>
<dbReference type="NCBIfam" id="TIGR02630">
    <property type="entry name" value="xylose_isom_A"/>
    <property type="match status" value="1"/>
</dbReference>
<dbReference type="PANTHER" id="PTHR48408">
    <property type="match status" value="1"/>
</dbReference>
<dbReference type="PANTHER" id="PTHR48408:SF1">
    <property type="entry name" value="XYLOSE ISOMERASE"/>
    <property type="match status" value="1"/>
</dbReference>
<dbReference type="PRINTS" id="PR00688">
    <property type="entry name" value="XYLOSISMRASE"/>
</dbReference>
<dbReference type="SUPFAM" id="SSF51658">
    <property type="entry name" value="Xylose isomerase-like"/>
    <property type="match status" value="1"/>
</dbReference>
<dbReference type="PROSITE" id="PS51415">
    <property type="entry name" value="XYLOSE_ISOMERASE"/>
    <property type="match status" value="1"/>
</dbReference>
<name>XYLA_OCEIH</name>
<evidence type="ECO:0000255" key="1">
    <source>
        <dbReference type="HAMAP-Rule" id="MF_00455"/>
    </source>
</evidence>